<name>PSAJ_PROMA</name>
<sequence>MFKIFSTKWFRSAPVVATIWIVITAGILVEWNRFVPDLLFHPGL</sequence>
<dbReference type="EMBL" id="AJ131438">
    <property type="protein sequence ID" value="CAB41404.1"/>
    <property type="molecule type" value="Genomic_DNA"/>
</dbReference>
<dbReference type="EMBL" id="AE017126">
    <property type="protein sequence ID" value="AAP99511.1"/>
    <property type="molecule type" value="Genomic_DNA"/>
</dbReference>
<dbReference type="RefSeq" id="NP_874859.1">
    <property type="nucleotide sequence ID" value="NC_005042.1"/>
</dbReference>
<dbReference type="RefSeq" id="WP_011124621.1">
    <property type="nucleotide sequence ID" value="NC_005042.1"/>
</dbReference>
<dbReference type="SMR" id="Q9X7I5"/>
<dbReference type="STRING" id="167539.Pro_0466"/>
<dbReference type="EnsemblBacteria" id="AAP99511">
    <property type="protein sequence ID" value="AAP99511"/>
    <property type="gene ID" value="Pro_0466"/>
</dbReference>
<dbReference type="KEGG" id="pma:Pro_0466"/>
<dbReference type="PATRIC" id="fig|167539.5.peg.479"/>
<dbReference type="eggNOG" id="ENOG5033A5A">
    <property type="taxonomic scope" value="Bacteria"/>
</dbReference>
<dbReference type="HOGENOM" id="CLU_212133_1_1_3"/>
<dbReference type="OrthoDB" id="532702at2"/>
<dbReference type="Proteomes" id="UP000001420">
    <property type="component" value="Chromosome"/>
</dbReference>
<dbReference type="GO" id="GO:0009522">
    <property type="term" value="C:photosystem I"/>
    <property type="evidence" value="ECO:0007669"/>
    <property type="project" value="UniProtKB-KW"/>
</dbReference>
<dbReference type="GO" id="GO:0031676">
    <property type="term" value="C:plasma membrane-derived thylakoid membrane"/>
    <property type="evidence" value="ECO:0007669"/>
    <property type="project" value="UniProtKB-SubCell"/>
</dbReference>
<dbReference type="GO" id="GO:0015979">
    <property type="term" value="P:photosynthesis"/>
    <property type="evidence" value="ECO:0007669"/>
    <property type="project" value="UniProtKB-UniRule"/>
</dbReference>
<dbReference type="Gene3D" id="1.20.5.510">
    <property type="entry name" value="Single helix bin"/>
    <property type="match status" value="1"/>
</dbReference>
<dbReference type="HAMAP" id="MF_00522">
    <property type="entry name" value="PSI_PsaJ"/>
    <property type="match status" value="1"/>
</dbReference>
<dbReference type="InterPro" id="IPR002615">
    <property type="entry name" value="PSI_PsaJ"/>
</dbReference>
<dbReference type="InterPro" id="IPR036062">
    <property type="entry name" value="PSI_PsaJ_sf"/>
</dbReference>
<dbReference type="NCBIfam" id="NF002743">
    <property type="entry name" value="PRK02733.1"/>
    <property type="match status" value="1"/>
</dbReference>
<dbReference type="Pfam" id="PF01701">
    <property type="entry name" value="PSI_PsaJ"/>
    <property type="match status" value="1"/>
</dbReference>
<dbReference type="SUPFAM" id="SSF81544">
    <property type="entry name" value="Subunit IX of photosystem I reaction centre, PsaJ"/>
    <property type="match status" value="1"/>
</dbReference>
<feature type="chain" id="PRO_0000207822" description="Photosystem I reaction center subunit IX">
    <location>
        <begin position="1"/>
        <end position="44"/>
    </location>
</feature>
<feature type="transmembrane region" description="Helical" evidence="2">
    <location>
        <begin position="9"/>
        <end position="29"/>
    </location>
</feature>
<gene>
    <name type="primary">psaJ</name>
    <name type="ordered locus">Pro_0466</name>
</gene>
<proteinExistence type="inferred from homology"/>
<organism>
    <name type="scientific">Prochlorococcus marinus (strain SARG / CCMP1375 / SS120)</name>
    <dbReference type="NCBI Taxonomy" id="167539"/>
    <lineage>
        <taxon>Bacteria</taxon>
        <taxon>Bacillati</taxon>
        <taxon>Cyanobacteriota</taxon>
        <taxon>Cyanophyceae</taxon>
        <taxon>Synechococcales</taxon>
        <taxon>Prochlorococcaceae</taxon>
        <taxon>Prochlorococcus</taxon>
    </lineage>
</organism>
<accession>Q9X7I5</accession>
<keyword id="KW-0472">Membrane</keyword>
<keyword id="KW-0602">Photosynthesis</keyword>
<keyword id="KW-0603">Photosystem I</keyword>
<keyword id="KW-1185">Reference proteome</keyword>
<keyword id="KW-0793">Thylakoid</keyword>
<keyword id="KW-0812">Transmembrane</keyword>
<keyword id="KW-1133">Transmembrane helix</keyword>
<protein>
    <recommendedName>
        <fullName>Photosystem I reaction center subunit IX</fullName>
    </recommendedName>
</protein>
<evidence type="ECO:0000250" key="1"/>
<evidence type="ECO:0000255" key="2"/>
<evidence type="ECO:0000305" key="3"/>
<reference key="1">
    <citation type="online journal article" date="1999" name="Plant Gene Register">
        <title>The 21 kDa protein associated with photosystem I in Prochlorococcus marinus is the PsaF protein.</title>
        <authorList>
            <person name="van der Staay G.W.M."/>
            <person name="Partensky F."/>
        </authorList>
        <locator>PGR99-067</locator>
    </citation>
    <scope>NUCLEOTIDE SEQUENCE [GENOMIC DNA]</scope>
    <source>
        <strain>SARG / CCMP1375 / SS120</strain>
    </source>
</reference>
<reference key="2">
    <citation type="journal article" date="2003" name="Proc. Natl. Acad. Sci. U.S.A.">
        <title>Genome sequence of the cyanobacterium Prochlorococcus marinus SS120, a nearly minimal oxyphototrophic genome.</title>
        <authorList>
            <person name="Dufresne A."/>
            <person name="Salanoubat M."/>
            <person name="Partensky F."/>
            <person name="Artiguenave F."/>
            <person name="Axmann I.M."/>
            <person name="Barbe V."/>
            <person name="Duprat S."/>
            <person name="Galperin M.Y."/>
            <person name="Koonin E.V."/>
            <person name="Le Gall F."/>
            <person name="Makarova K.S."/>
            <person name="Ostrowski M."/>
            <person name="Oztas S."/>
            <person name="Robert C."/>
            <person name="Rogozin I.B."/>
            <person name="Scanlan D.J."/>
            <person name="Tandeau de Marsac N."/>
            <person name="Weissenbach J."/>
            <person name="Wincker P."/>
            <person name="Wolf Y.I."/>
            <person name="Hess W.R."/>
        </authorList>
    </citation>
    <scope>NUCLEOTIDE SEQUENCE [LARGE SCALE GENOMIC DNA]</scope>
    <source>
        <strain>SARG / CCMP1375 / SS120</strain>
    </source>
</reference>
<comment type="function">
    <text evidence="1">May help in the organization of the PsaE and PsaF subunits.</text>
</comment>
<comment type="subcellular location">
    <subcellularLocation>
        <location evidence="1">Cellular thylakoid membrane</location>
        <topology evidence="1">Single-pass membrane protein</topology>
    </subcellularLocation>
</comment>
<comment type="similarity">
    <text evidence="3">Belongs to the PsaJ family.</text>
</comment>